<organism>
    <name type="scientific">Silurus asotus</name>
    <name type="common">Amur catfish</name>
    <name type="synonym">Parasilurus asotus</name>
    <dbReference type="NCBI Taxonomy" id="30991"/>
    <lineage>
        <taxon>Eukaryota</taxon>
        <taxon>Metazoa</taxon>
        <taxon>Chordata</taxon>
        <taxon>Craniata</taxon>
        <taxon>Vertebrata</taxon>
        <taxon>Euteleostomi</taxon>
        <taxon>Actinopterygii</taxon>
        <taxon>Neopterygii</taxon>
        <taxon>Teleostei</taxon>
        <taxon>Ostariophysi</taxon>
        <taxon>Siluriformes</taxon>
        <taxon>Siluridae</taxon>
        <taxon>Silurus</taxon>
    </lineage>
</organism>
<protein>
    <recommendedName>
        <fullName>Hemoglobin subunit beta</fullName>
    </recommendedName>
    <alternativeName>
        <fullName>Beta-globin</fullName>
    </alternativeName>
    <alternativeName>
        <fullName>Hemoglobin beta chain</fullName>
    </alternativeName>
</protein>
<comment type="function">
    <text>Involved in oxygen transport from gills to the various peripheral tissues.</text>
</comment>
<comment type="subunit">
    <text>Heterotetramer of two alpha chains and two beta chains.</text>
</comment>
<comment type="tissue specificity">
    <text>Red blood cells.</text>
</comment>
<comment type="similarity">
    <text evidence="1">Belongs to the globin family.</text>
</comment>
<evidence type="ECO:0000255" key="1">
    <source>
        <dbReference type="PROSITE-ProRule" id="PRU00238"/>
    </source>
</evidence>
<gene>
    <name type="primary">hbb</name>
</gene>
<proteinExistence type="evidence at transcript level"/>
<feature type="initiator methionine" description="Removed">
    <location>
        <position position="1"/>
    </location>
</feature>
<feature type="chain" id="PRO_0000053108" description="Hemoglobin subunit beta">
    <location>
        <begin position="2"/>
        <end position="148"/>
    </location>
</feature>
<feature type="domain" description="Globin" evidence="1">
    <location>
        <begin position="3"/>
        <end position="148"/>
    </location>
</feature>
<feature type="binding site" description="distal binding residue">
    <location>
        <position position="64"/>
    </location>
    <ligand>
        <name>heme b</name>
        <dbReference type="ChEBI" id="CHEBI:60344"/>
    </ligand>
    <ligandPart>
        <name>Fe</name>
        <dbReference type="ChEBI" id="CHEBI:18248"/>
    </ligandPart>
</feature>
<feature type="binding site" description="proximal binding residue">
    <location>
        <position position="93"/>
    </location>
    <ligand>
        <name>heme b</name>
        <dbReference type="ChEBI" id="CHEBI:60344"/>
    </ligand>
    <ligandPart>
        <name>Fe</name>
        <dbReference type="ChEBI" id="CHEBI:18248"/>
    </ligandPart>
</feature>
<dbReference type="EMBL" id="S83540">
    <property type="protein sequence ID" value="AAB50797.2"/>
    <property type="molecule type" value="mRNA"/>
</dbReference>
<dbReference type="GO" id="GO:0072562">
    <property type="term" value="C:blood microparticle"/>
    <property type="evidence" value="ECO:0007669"/>
    <property type="project" value="TreeGrafter"/>
</dbReference>
<dbReference type="GO" id="GO:0031838">
    <property type="term" value="C:haptoglobin-hemoglobin complex"/>
    <property type="evidence" value="ECO:0007669"/>
    <property type="project" value="TreeGrafter"/>
</dbReference>
<dbReference type="GO" id="GO:0005833">
    <property type="term" value="C:hemoglobin complex"/>
    <property type="evidence" value="ECO:0007669"/>
    <property type="project" value="InterPro"/>
</dbReference>
<dbReference type="GO" id="GO:0031720">
    <property type="term" value="F:haptoglobin binding"/>
    <property type="evidence" value="ECO:0007669"/>
    <property type="project" value="TreeGrafter"/>
</dbReference>
<dbReference type="GO" id="GO:0020037">
    <property type="term" value="F:heme binding"/>
    <property type="evidence" value="ECO:0007669"/>
    <property type="project" value="InterPro"/>
</dbReference>
<dbReference type="GO" id="GO:0046872">
    <property type="term" value="F:metal ion binding"/>
    <property type="evidence" value="ECO:0007669"/>
    <property type="project" value="UniProtKB-KW"/>
</dbReference>
<dbReference type="GO" id="GO:0043177">
    <property type="term" value="F:organic acid binding"/>
    <property type="evidence" value="ECO:0007669"/>
    <property type="project" value="TreeGrafter"/>
</dbReference>
<dbReference type="GO" id="GO:0019825">
    <property type="term" value="F:oxygen binding"/>
    <property type="evidence" value="ECO:0007669"/>
    <property type="project" value="InterPro"/>
</dbReference>
<dbReference type="GO" id="GO:0005344">
    <property type="term" value="F:oxygen carrier activity"/>
    <property type="evidence" value="ECO:0007669"/>
    <property type="project" value="UniProtKB-KW"/>
</dbReference>
<dbReference type="GO" id="GO:0004601">
    <property type="term" value="F:peroxidase activity"/>
    <property type="evidence" value="ECO:0007669"/>
    <property type="project" value="TreeGrafter"/>
</dbReference>
<dbReference type="GO" id="GO:0042744">
    <property type="term" value="P:hydrogen peroxide catabolic process"/>
    <property type="evidence" value="ECO:0007669"/>
    <property type="project" value="TreeGrafter"/>
</dbReference>
<dbReference type="CDD" id="cd08925">
    <property type="entry name" value="Hb-beta-like"/>
    <property type="match status" value="1"/>
</dbReference>
<dbReference type="FunFam" id="1.10.490.10:FF:000001">
    <property type="entry name" value="Hemoglobin subunit beta"/>
    <property type="match status" value="1"/>
</dbReference>
<dbReference type="Gene3D" id="1.10.490.10">
    <property type="entry name" value="Globins"/>
    <property type="match status" value="1"/>
</dbReference>
<dbReference type="InterPro" id="IPR000971">
    <property type="entry name" value="Globin"/>
</dbReference>
<dbReference type="InterPro" id="IPR009050">
    <property type="entry name" value="Globin-like_sf"/>
</dbReference>
<dbReference type="InterPro" id="IPR012292">
    <property type="entry name" value="Globin/Proto"/>
</dbReference>
<dbReference type="InterPro" id="IPR002337">
    <property type="entry name" value="Hemoglobin_b"/>
</dbReference>
<dbReference type="InterPro" id="IPR050056">
    <property type="entry name" value="Hemoglobin_oxygen_transport"/>
</dbReference>
<dbReference type="PANTHER" id="PTHR11442">
    <property type="entry name" value="HEMOGLOBIN FAMILY MEMBER"/>
    <property type="match status" value="1"/>
</dbReference>
<dbReference type="PANTHER" id="PTHR11442:SF7">
    <property type="entry name" value="HEMOGLOBIN SUBUNIT EPSILON"/>
    <property type="match status" value="1"/>
</dbReference>
<dbReference type="Pfam" id="PF00042">
    <property type="entry name" value="Globin"/>
    <property type="match status" value="1"/>
</dbReference>
<dbReference type="PRINTS" id="PR00814">
    <property type="entry name" value="BETAHAEM"/>
</dbReference>
<dbReference type="SUPFAM" id="SSF46458">
    <property type="entry name" value="Globin-like"/>
    <property type="match status" value="1"/>
</dbReference>
<dbReference type="PROSITE" id="PS01033">
    <property type="entry name" value="GLOBIN"/>
    <property type="match status" value="1"/>
</dbReference>
<sequence>MVXWTDXERHVIADVWGKINPDEIGPHALARLLIVYPWTQRYFSSFGNLSNAAAILGNPKVAAHGKVVVGGLDKAVKHLDNVKGTYAKLSELHSEKLHVDPSNFTLLADCLTITLAAKFGPSVFTPEVHEVWQKFLNVAVAALGKQYH</sequence>
<keyword id="KW-0349">Heme</keyword>
<keyword id="KW-0408">Iron</keyword>
<keyword id="KW-0479">Metal-binding</keyword>
<keyword id="KW-0561">Oxygen transport</keyword>
<keyword id="KW-0813">Transport</keyword>
<accession>O13163</accession>
<reference key="1">
    <citation type="journal article" date="1996" name="J. Protein Chem.">
        <title>PCR amplification of cDNAs of fish hemoglobin beta chains using a consensus primer: cDNA-derived amino acid sequences of beta chains from the catfish Parasilurus asotus and the scad Decapterus maruadsi.</title>
        <authorList>
            <person name="Suzuki T."/>
            <person name="Nishikawa T."/>
        </authorList>
    </citation>
    <scope>NUCLEOTIDE SEQUENCE [MRNA]</scope>
    <source>
        <tissue>Blood</tissue>
    </source>
</reference>
<name>HBB_SILAS</name>